<gene>
    <name evidence="1" type="primary">ureD2</name>
    <name type="ordered locus">BRADO4064</name>
</gene>
<proteinExistence type="inferred from homology"/>
<sequence length="286" mass="30931">MSDLSPDKPRLDLSFVRRGSRTVIDRRLFAWPFVLTRSFHTDAARPDCLSVILQTGSGAVHGEDRLTQRLTLHAGAAVCVTTQGATSVHRAEPGARAVEHVLLHVEAGASLDYRPEPRILFPDAALCQVLDLECAADAAALVTDAFTMHDPDGQGRLFRELDSKLIVRRQGKEPLLIDRMHLRDPATALFNGRRAFGSAVLMLPPTHDRAAIRLRLADAFARIDDLYAAASLLQDGAGIGVRFAAREVRQLRAGFDAVAAVVREIDLGARAAQAPRAAATARPTAA</sequence>
<protein>
    <recommendedName>
        <fullName evidence="1">Urease accessory protein UreD 2</fullName>
    </recommendedName>
</protein>
<reference key="1">
    <citation type="journal article" date="2007" name="Science">
        <title>Legumes symbioses: absence of nod genes in photosynthetic bradyrhizobia.</title>
        <authorList>
            <person name="Giraud E."/>
            <person name="Moulin L."/>
            <person name="Vallenet D."/>
            <person name="Barbe V."/>
            <person name="Cytryn E."/>
            <person name="Avarre J.-C."/>
            <person name="Jaubert M."/>
            <person name="Simon D."/>
            <person name="Cartieaux F."/>
            <person name="Prin Y."/>
            <person name="Bena G."/>
            <person name="Hannibal L."/>
            <person name="Fardoux J."/>
            <person name="Kojadinovic M."/>
            <person name="Vuillet L."/>
            <person name="Lajus A."/>
            <person name="Cruveiller S."/>
            <person name="Rouy Z."/>
            <person name="Mangenot S."/>
            <person name="Segurens B."/>
            <person name="Dossat C."/>
            <person name="Franck W.L."/>
            <person name="Chang W.-S."/>
            <person name="Saunders E."/>
            <person name="Bruce D."/>
            <person name="Richardson P."/>
            <person name="Normand P."/>
            <person name="Dreyfus B."/>
            <person name="Pignol D."/>
            <person name="Stacey G."/>
            <person name="Emerich D."/>
            <person name="Vermeglio A."/>
            <person name="Medigue C."/>
            <person name="Sadowsky M."/>
        </authorList>
    </citation>
    <scope>NUCLEOTIDE SEQUENCE [LARGE SCALE GENOMIC DNA]</scope>
    <source>
        <strain>ORS 278</strain>
    </source>
</reference>
<accession>A4YV90</accession>
<keyword id="KW-0143">Chaperone</keyword>
<keyword id="KW-0963">Cytoplasm</keyword>
<keyword id="KW-0996">Nickel insertion</keyword>
<keyword id="KW-1185">Reference proteome</keyword>
<dbReference type="EMBL" id="CU234118">
    <property type="protein sequence ID" value="CAL77816.1"/>
    <property type="molecule type" value="Genomic_DNA"/>
</dbReference>
<dbReference type="RefSeq" id="WP_011926949.1">
    <property type="nucleotide sequence ID" value="NC_009445.1"/>
</dbReference>
<dbReference type="SMR" id="A4YV90"/>
<dbReference type="STRING" id="114615.BRADO4064"/>
<dbReference type="KEGG" id="bra:BRADO4064"/>
<dbReference type="eggNOG" id="COG0829">
    <property type="taxonomic scope" value="Bacteria"/>
</dbReference>
<dbReference type="HOGENOM" id="CLU_056339_1_1_5"/>
<dbReference type="OrthoDB" id="9807968at2"/>
<dbReference type="Proteomes" id="UP000001994">
    <property type="component" value="Chromosome"/>
</dbReference>
<dbReference type="GO" id="GO:0005737">
    <property type="term" value="C:cytoplasm"/>
    <property type="evidence" value="ECO:0007669"/>
    <property type="project" value="UniProtKB-SubCell"/>
</dbReference>
<dbReference type="GO" id="GO:0016151">
    <property type="term" value="F:nickel cation binding"/>
    <property type="evidence" value="ECO:0007669"/>
    <property type="project" value="UniProtKB-UniRule"/>
</dbReference>
<dbReference type="HAMAP" id="MF_01384">
    <property type="entry name" value="UreD"/>
    <property type="match status" value="1"/>
</dbReference>
<dbReference type="InterPro" id="IPR002669">
    <property type="entry name" value="UreD"/>
</dbReference>
<dbReference type="PANTHER" id="PTHR33643">
    <property type="entry name" value="UREASE ACCESSORY PROTEIN D"/>
    <property type="match status" value="1"/>
</dbReference>
<dbReference type="PANTHER" id="PTHR33643:SF1">
    <property type="entry name" value="UREASE ACCESSORY PROTEIN D"/>
    <property type="match status" value="1"/>
</dbReference>
<dbReference type="Pfam" id="PF01774">
    <property type="entry name" value="UreD"/>
    <property type="match status" value="1"/>
</dbReference>
<comment type="function">
    <text evidence="1">Required for maturation of urease via the functional incorporation of the urease nickel metallocenter.</text>
</comment>
<comment type="subunit">
    <text evidence="1">UreD, UreF and UreG form a complex that acts as a GTP-hydrolysis-dependent molecular chaperone, activating the urease apoprotein by helping to assemble the nickel containing metallocenter of UreC. The UreE protein probably delivers the nickel.</text>
</comment>
<comment type="subcellular location">
    <subcellularLocation>
        <location evidence="1">Cytoplasm</location>
    </subcellularLocation>
</comment>
<comment type="similarity">
    <text evidence="1">Belongs to the UreD family.</text>
</comment>
<feature type="chain" id="PRO_0000346556" description="Urease accessory protein UreD 2">
    <location>
        <begin position="1"/>
        <end position="286"/>
    </location>
</feature>
<name>URED2_BRASO</name>
<evidence type="ECO:0000255" key="1">
    <source>
        <dbReference type="HAMAP-Rule" id="MF_01384"/>
    </source>
</evidence>
<organism>
    <name type="scientific">Bradyrhizobium sp. (strain ORS 278)</name>
    <dbReference type="NCBI Taxonomy" id="114615"/>
    <lineage>
        <taxon>Bacteria</taxon>
        <taxon>Pseudomonadati</taxon>
        <taxon>Pseudomonadota</taxon>
        <taxon>Alphaproteobacteria</taxon>
        <taxon>Hyphomicrobiales</taxon>
        <taxon>Nitrobacteraceae</taxon>
        <taxon>Bradyrhizobium</taxon>
    </lineage>
</organism>